<feature type="chain" id="PRO_0000104303" description="Large ribosomal subunit protein uL11">
    <location>
        <begin position="1"/>
        <end position="144"/>
    </location>
</feature>
<keyword id="KW-0488">Methylation</keyword>
<keyword id="KW-1185">Reference proteome</keyword>
<keyword id="KW-0687">Ribonucleoprotein</keyword>
<keyword id="KW-0689">Ribosomal protein</keyword>
<keyword id="KW-0694">RNA-binding</keyword>
<keyword id="KW-0699">rRNA-binding</keyword>
<organism>
    <name type="scientific">Legionella pneumophila subsp. pneumophila (strain Philadelphia 1 / ATCC 33152 / DSM 7513)</name>
    <dbReference type="NCBI Taxonomy" id="272624"/>
    <lineage>
        <taxon>Bacteria</taxon>
        <taxon>Pseudomonadati</taxon>
        <taxon>Pseudomonadota</taxon>
        <taxon>Gammaproteobacteria</taxon>
        <taxon>Legionellales</taxon>
        <taxon>Legionellaceae</taxon>
        <taxon>Legionella</taxon>
    </lineage>
</organism>
<comment type="function">
    <text evidence="1">Forms part of the ribosomal stalk which helps the ribosome interact with GTP-bound translation factors.</text>
</comment>
<comment type="subunit">
    <text evidence="1">Part of the ribosomal stalk of the 50S ribosomal subunit. Interacts with L10 and the large rRNA to form the base of the stalk. L10 forms an elongated spine to which L12 dimers bind in a sequential fashion forming a multimeric L10(L12)X complex.</text>
</comment>
<comment type="PTM">
    <text evidence="1">One or more lysine residues are methylated.</text>
</comment>
<comment type="similarity">
    <text evidence="1">Belongs to the universal ribosomal protein uL11 family.</text>
</comment>
<reference key="1">
    <citation type="journal article" date="2004" name="Science">
        <title>The genomic sequence of the accidental pathogen Legionella pneumophila.</title>
        <authorList>
            <person name="Chien M."/>
            <person name="Morozova I."/>
            <person name="Shi S."/>
            <person name="Sheng H."/>
            <person name="Chen J."/>
            <person name="Gomez S.M."/>
            <person name="Asamani G."/>
            <person name="Hill K."/>
            <person name="Nuara J."/>
            <person name="Feder M."/>
            <person name="Rineer J."/>
            <person name="Greenberg J.J."/>
            <person name="Steshenko V."/>
            <person name="Park S.H."/>
            <person name="Zhao B."/>
            <person name="Teplitskaya E."/>
            <person name="Edwards J.R."/>
            <person name="Pampou S."/>
            <person name="Georghiou A."/>
            <person name="Chou I.-C."/>
            <person name="Iannuccilli W."/>
            <person name="Ulz M.E."/>
            <person name="Kim D.H."/>
            <person name="Geringer-Sameth A."/>
            <person name="Goldsberry C."/>
            <person name="Morozov P."/>
            <person name="Fischer S.G."/>
            <person name="Segal G."/>
            <person name="Qu X."/>
            <person name="Rzhetsky A."/>
            <person name="Zhang P."/>
            <person name="Cayanis E."/>
            <person name="De Jong P.J."/>
            <person name="Ju J."/>
            <person name="Kalachikov S."/>
            <person name="Shuman H.A."/>
            <person name="Russo J.J."/>
        </authorList>
    </citation>
    <scope>NUCLEOTIDE SEQUENCE [LARGE SCALE GENOMIC DNA]</scope>
    <source>
        <strain>Philadelphia 1 / ATCC 33152 / DSM 7513</strain>
    </source>
</reference>
<gene>
    <name evidence="1" type="primary">rplK</name>
    <name type="ordered locus">lpg0318</name>
</gene>
<proteinExistence type="inferred from homology"/>
<accession>Q5ZYQ4</accession>
<sequence length="144" mass="15090">MAKKVEAYIKLQIPAGKANPSPPVGPALGQRGVNIMEFCKAFNAATQQMEQGLPIPVVITVYSDRSFTFITKTPPASVLLKKAAGIQSGSGTPNTKKVAKLNVSQLEEIAKVKKPDLTAADLAAAVRSIAGTARSMGIEVEGLE</sequence>
<evidence type="ECO:0000255" key="1">
    <source>
        <dbReference type="HAMAP-Rule" id="MF_00736"/>
    </source>
</evidence>
<evidence type="ECO:0000305" key="2"/>
<dbReference type="EMBL" id="AE017354">
    <property type="protein sequence ID" value="AAU26415.1"/>
    <property type="molecule type" value="Genomic_DNA"/>
</dbReference>
<dbReference type="RefSeq" id="WP_010946069.1">
    <property type="nucleotide sequence ID" value="NC_002942.5"/>
</dbReference>
<dbReference type="RefSeq" id="YP_094362.1">
    <property type="nucleotide sequence ID" value="NC_002942.5"/>
</dbReference>
<dbReference type="SMR" id="Q5ZYQ4"/>
<dbReference type="STRING" id="272624.lpg0318"/>
<dbReference type="PaxDb" id="272624-lpg0318"/>
<dbReference type="GeneID" id="57034321"/>
<dbReference type="KEGG" id="lpn:lpg0318"/>
<dbReference type="PATRIC" id="fig|272624.6.peg.325"/>
<dbReference type="eggNOG" id="COG0080">
    <property type="taxonomic scope" value="Bacteria"/>
</dbReference>
<dbReference type="HOGENOM" id="CLU_074237_2_0_6"/>
<dbReference type="OrthoDB" id="9802408at2"/>
<dbReference type="Proteomes" id="UP000000609">
    <property type="component" value="Chromosome"/>
</dbReference>
<dbReference type="GO" id="GO:0022625">
    <property type="term" value="C:cytosolic large ribosomal subunit"/>
    <property type="evidence" value="ECO:0007669"/>
    <property type="project" value="TreeGrafter"/>
</dbReference>
<dbReference type="GO" id="GO:0070180">
    <property type="term" value="F:large ribosomal subunit rRNA binding"/>
    <property type="evidence" value="ECO:0007669"/>
    <property type="project" value="UniProtKB-UniRule"/>
</dbReference>
<dbReference type="GO" id="GO:0003735">
    <property type="term" value="F:structural constituent of ribosome"/>
    <property type="evidence" value="ECO:0007669"/>
    <property type="project" value="InterPro"/>
</dbReference>
<dbReference type="GO" id="GO:0006412">
    <property type="term" value="P:translation"/>
    <property type="evidence" value="ECO:0007669"/>
    <property type="project" value="UniProtKB-UniRule"/>
</dbReference>
<dbReference type="CDD" id="cd00349">
    <property type="entry name" value="Ribosomal_L11"/>
    <property type="match status" value="1"/>
</dbReference>
<dbReference type="FunFam" id="1.10.10.250:FF:000001">
    <property type="entry name" value="50S ribosomal protein L11"/>
    <property type="match status" value="1"/>
</dbReference>
<dbReference type="FunFam" id="3.30.1550.10:FF:000001">
    <property type="entry name" value="50S ribosomal protein L11"/>
    <property type="match status" value="1"/>
</dbReference>
<dbReference type="Gene3D" id="1.10.10.250">
    <property type="entry name" value="Ribosomal protein L11, C-terminal domain"/>
    <property type="match status" value="1"/>
</dbReference>
<dbReference type="Gene3D" id="3.30.1550.10">
    <property type="entry name" value="Ribosomal protein L11/L12, N-terminal domain"/>
    <property type="match status" value="1"/>
</dbReference>
<dbReference type="HAMAP" id="MF_00736">
    <property type="entry name" value="Ribosomal_uL11"/>
    <property type="match status" value="1"/>
</dbReference>
<dbReference type="InterPro" id="IPR000911">
    <property type="entry name" value="Ribosomal_uL11"/>
</dbReference>
<dbReference type="InterPro" id="IPR006519">
    <property type="entry name" value="Ribosomal_uL11_bac-typ"/>
</dbReference>
<dbReference type="InterPro" id="IPR020783">
    <property type="entry name" value="Ribosomal_uL11_C"/>
</dbReference>
<dbReference type="InterPro" id="IPR036769">
    <property type="entry name" value="Ribosomal_uL11_C_sf"/>
</dbReference>
<dbReference type="InterPro" id="IPR020785">
    <property type="entry name" value="Ribosomal_uL11_CS"/>
</dbReference>
<dbReference type="InterPro" id="IPR020784">
    <property type="entry name" value="Ribosomal_uL11_N"/>
</dbReference>
<dbReference type="InterPro" id="IPR036796">
    <property type="entry name" value="Ribosomal_uL11_N_sf"/>
</dbReference>
<dbReference type="NCBIfam" id="TIGR01632">
    <property type="entry name" value="L11_bact"/>
    <property type="match status" value="1"/>
</dbReference>
<dbReference type="PANTHER" id="PTHR11661">
    <property type="entry name" value="60S RIBOSOMAL PROTEIN L12"/>
    <property type="match status" value="1"/>
</dbReference>
<dbReference type="PANTHER" id="PTHR11661:SF1">
    <property type="entry name" value="LARGE RIBOSOMAL SUBUNIT PROTEIN UL11M"/>
    <property type="match status" value="1"/>
</dbReference>
<dbReference type="Pfam" id="PF00298">
    <property type="entry name" value="Ribosomal_L11"/>
    <property type="match status" value="1"/>
</dbReference>
<dbReference type="Pfam" id="PF03946">
    <property type="entry name" value="Ribosomal_L11_N"/>
    <property type="match status" value="1"/>
</dbReference>
<dbReference type="SMART" id="SM00649">
    <property type="entry name" value="RL11"/>
    <property type="match status" value="1"/>
</dbReference>
<dbReference type="SUPFAM" id="SSF54747">
    <property type="entry name" value="Ribosomal L11/L12e N-terminal domain"/>
    <property type="match status" value="1"/>
</dbReference>
<dbReference type="SUPFAM" id="SSF46906">
    <property type="entry name" value="Ribosomal protein L11, C-terminal domain"/>
    <property type="match status" value="1"/>
</dbReference>
<dbReference type="PROSITE" id="PS00359">
    <property type="entry name" value="RIBOSOMAL_L11"/>
    <property type="match status" value="1"/>
</dbReference>
<protein>
    <recommendedName>
        <fullName evidence="1">Large ribosomal subunit protein uL11</fullName>
    </recommendedName>
    <alternativeName>
        <fullName evidence="2">50S ribosomal protein L11</fullName>
    </alternativeName>
</protein>
<name>RL11_LEGPH</name>